<keyword id="KW-0028">Amino-acid biosynthesis</keyword>
<keyword id="KW-0368">Histidine biosynthesis</keyword>
<keyword id="KW-0378">Hydrolase</keyword>
<keyword id="KW-0486">Methionine biosynthesis</keyword>
<keyword id="KW-0511">Multifunctional enzyme</keyword>
<keyword id="KW-0521">NADP</keyword>
<keyword id="KW-0554">One-carbon metabolism</keyword>
<keyword id="KW-0560">Oxidoreductase</keyword>
<keyword id="KW-0658">Purine biosynthesis</keyword>
<keyword id="KW-1185">Reference proteome</keyword>
<accession>Q7VVW3</accession>
<organism>
    <name type="scientific">Bordetella pertussis (strain Tohama I / ATCC BAA-589 / NCTC 13251)</name>
    <dbReference type="NCBI Taxonomy" id="257313"/>
    <lineage>
        <taxon>Bacteria</taxon>
        <taxon>Pseudomonadati</taxon>
        <taxon>Pseudomonadota</taxon>
        <taxon>Betaproteobacteria</taxon>
        <taxon>Burkholderiales</taxon>
        <taxon>Alcaligenaceae</taxon>
        <taxon>Bordetella</taxon>
    </lineage>
</organism>
<feature type="chain" id="PRO_0000268288" description="Bifunctional protein FolD 2">
    <location>
        <begin position="1"/>
        <end position="283"/>
    </location>
</feature>
<feature type="binding site" evidence="1">
    <location>
        <begin position="165"/>
        <end position="167"/>
    </location>
    <ligand>
        <name>NADP(+)</name>
        <dbReference type="ChEBI" id="CHEBI:58349"/>
    </ligand>
</feature>
<feature type="binding site" evidence="1">
    <location>
        <position position="190"/>
    </location>
    <ligand>
        <name>NADP(+)</name>
        <dbReference type="ChEBI" id="CHEBI:58349"/>
    </ligand>
</feature>
<feature type="binding site" evidence="1">
    <location>
        <position position="231"/>
    </location>
    <ligand>
        <name>NADP(+)</name>
        <dbReference type="ChEBI" id="CHEBI:58349"/>
    </ligand>
</feature>
<comment type="function">
    <text evidence="1">Catalyzes the oxidation of 5,10-methylenetetrahydrofolate to 5,10-methenyltetrahydrofolate and then the hydrolysis of 5,10-methenyltetrahydrofolate to 10-formyltetrahydrofolate.</text>
</comment>
<comment type="catalytic activity">
    <reaction evidence="1">
        <text>(6R)-5,10-methylene-5,6,7,8-tetrahydrofolate + NADP(+) = (6R)-5,10-methenyltetrahydrofolate + NADPH</text>
        <dbReference type="Rhea" id="RHEA:22812"/>
        <dbReference type="ChEBI" id="CHEBI:15636"/>
        <dbReference type="ChEBI" id="CHEBI:57455"/>
        <dbReference type="ChEBI" id="CHEBI:57783"/>
        <dbReference type="ChEBI" id="CHEBI:58349"/>
        <dbReference type="EC" id="1.5.1.5"/>
    </reaction>
</comment>
<comment type="catalytic activity">
    <reaction evidence="1">
        <text>(6R)-5,10-methenyltetrahydrofolate + H2O = (6R)-10-formyltetrahydrofolate + H(+)</text>
        <dbReference type="Rhea" id="RHEA:23700"/>
        <dbReference type="ChEBI" id="CHEBI:15377"/>
        <dbReference type="ChEBI" id="CHEBI:15378"/>
        <dbReference type="ChEBI" id="CHEBI:57455"/>
        <dbReference type="ChEBI" id="CHEBI:195366"/>
        <dbReference type="EC" id="3.5.4.9"/>
    </reaction>
</comment>
<comment type="pathway">
    <text evidence="1">One-carbon metabolism; tetrahydrofolate interconversion.</text>
</comment>
<comment type="subunit">
    <text evidence="1">Homodimer.</text>
</comment>
<comment type="similarity">
    <text evidence="1">Belongs to the tetrahydrofolate dehydrogenase/cyclohydrolase family.</text>
</comment>
<comment type="sequence caution" evidence="2">
    <conflict type="erroneous initiation">
        <sequence resource="EMBL-CDS" id="CAE42794"/>
    </conflict>
</comment>
<evidence type="ECO:0000255" key="1">
    <source>
        <dbReference type="HAMAP-Rule" id="MF_01576"/>
    </source>
</evidence>
<evidence type="ECO:0000305" key="2"/>
<sequence length="283" mass="29529">MKAKVIDGSRASARIREQLKERVACLRARNIRPGLAVLLVGEDPASQVYVRNKVAACEQVGIHSVTERYPSAWTENQLLDRIASLHGDPAINGILVQLPLPPHMSAHRVIEAISPLKDVDGFHISNAGLLMTGKPQFQPCTPYGVMKLLESEGVSLRGAEAVIVGASNIVGKPMAMLLLAAGATVTICNSKTRDLAGQARRADVLIVAAGRAGIVDGSMIKPGAVVIDVGINRSPDGRLCGDVDYGSAAKVAGAITPVPGGVGPMTIAMLLANTVEAAERSAI</sequence>
<reference key="1">
    <citation type="journal article" date="2003" name="Nat. Genet.">
        <title>Comparative analysis of the genome sequences of Bordetella pertussis, Bordetella parapertussis and Bordetella bronchiseptica.</title>
        <authorList>
            <person name="Parkhill J."/>
            <person name="Sebaihia M."/>
            <person name="Preston A."/>
            <person name="Murphy L.D."/>
            <person name="Thomson N.R."/>
            <person name="Harris D.E."/>
            <person name="Holden M.T.G."/>
            <person name="Churcher C.M."/>
            <person name="Bentley S.D."/>
            <person name="Mungall K.L."/>
            <person name="Cerdeno-Tarraga A.-M."/>
            <person name="Temple L."/>
            <person name="James K.D."/>
            <person name="Harris B."/>
            <person name="Quail M.A."/>
            <person name="Achtman M."/>
            <person name="Atkin R."/>
            <person name="Baker S."/>
            <person name="Basham D."/>
            <person name="Bason N."/>
            <person name="Cherevach I."/>
            <person name="Chillingworth T."/>
            <person name="Collins M."/>
            <person name="Cronin A."/>
            <person name="Davis P."/>
            <person name="Doggett J."/>
            <person name="Feltwell T."/>
            <person name="Goble A."/>
            <person name="Hamlin N."/>
            <person name="Hauser H."/>
            <person name="Holroyd S."/>
            <person name="Jagels K."/>
            <person name="Leather S."/>
            <person name="Moule S."/>
            <person name="Norberczak H."/>
            <person name="O'Neil S."/>
            <person name="Ormond D."/>
            <person name="Price C."/>
            <person name="Rabbinowitsch E."/>
            <person name="Rutter S."/>
            <person name="Sanders M."/>
            <person name="Saunders D."/>
            <person name="Seeger K."/>
            <person name="Sharp S."/>
            <person name="Simmonds M."/>
            <person name="Skelton J."/>
            <person name="Squares R."/>
            <person name="Squares S."/>
            <person name="Stevens K."/>
            <person name="Unwin L."/>
            <person name="Whitehead S."/>
            <person name="Barrell B.G."/>
            <person name="Maskell D.J."/>
        </authorList>
    </citation>
    <scope>NUCLEOTIDE SEQUENCE [LARGE SCALE GENOMIC DNA]</scope>
    <source>
        <strain>Tohama I / ATCC BAA-589 / NCTC 13251</strain>
    </source>
</reference>
<proteinExistence type="inferred from homology"/>
<dbReference type="EC" id="1.5.1.5" evidence="1"/>
<dbReference type="EC" id="3.5.4.9" evidence="1"/>
<dbReference type="EMBL" id="BX640418">
    <property type="protein sequence ID" value="CAE42794.1"/>
    <property type="status" value="ALT_INIT"/>
    <property type="molecule type" value="Genomic_DNA"/>
</dbReference>
<dbReference type="RefSeq" id="NP_881149.1">
    <property type="nucleotide sequence ID" value="NC_002929.2"/>
</dbReference>
<dbReference type="SMR" id="Q7VVW3"/>
<dbReference type="STRING" id="257313.BP2522"/>
<dbReference type="PaxDb" id="257313-BP2522"/>
<dbReference type="KEGG" id="bpe:BP2522"/>
<dbReference type="PATRIC" id="fig|257313.5.peg.2720"/>
<dbReference type="eggNOG" id="COG0190">
    <property type="taxonomic scope" value="Bacteria"/>
</dbReference>
<dbReference type="HOGENOM" id="CLU_034045_2_1_4"/>
<dbReference type="UniPathway" id="UPA00193"/>
<dbReference type="Proteomes" id="UP000002676">
    <property type="component" value="Chromosome"/>
</dbReference>
<dbReference type="GO" id="GO:0005829">
    <property type="term" value="C:cytosol"/>
    <property type="evidence" value="ECO:0007669"/>
    <property type="project" value="TreeGrafter"/>
</dbReference>
<dbReference type="GO" id="GO:0004477">
    <property type="term" value="F:methenyltetrahydrofolate cyclohydrolase activity"/>
    <property type="evidence" value="ECO:0007669"/>
    <property type="project" value="UniProtKB-UniRule"/>
</dbReference>
<dbReference type="GO" id="GO:0004488">
    <property type="term" value="F:methylenetetrahydrofolate dehydrogenase (NADP+) activity"/>
    <property type="evidence" value="ECO:0007669"/>
    <property type="project" value="UniProtKB-UniRule"/>
</dbReference>
<dbReference type="GO" id="GO:0000105">
    <property type="term" value="P:L-histidine biosynthetic process"/>
    <property type="evidence" value="ECO:0007669"/>
    <property type="project" value="UniProtKB-KW"/>
</dbReference>
<dbReference type="GO" id="GO:0009086">
    <property type="term" value="P:methionine biosynthetic process"/>
    <property type="evidence" value="ECO:0007669"/>
    <property type="project" value="UniProtKB-KW"/>
</dbReference>
<dbReference type="GO" id="GO:0006164">
    <property type="term" value="P:purine nucleotide biosynthetic process"/>
    <property type="evidence" value="ECO:0007669"/>
    <property type="project" value="UniProtKB-KW"/>
</dbReference>
<dbReference type="GO" id="GO:0035999">
    <property type="term" value="P:tetrahydrofolate interconversion"/>
    <property type="evidence" value="ECO:0007669"/>
    <property type="project" value="UniProtKB-UniRule"/>
</dbReference>
<dbReference type="CDD" id="cd01080">
    <property type="entry name" value="NAD_bind_m-THF_DH_Cyclohyd"/>
    <property type="match status" value="1"/>
</dbReference>
<dbReference type="FunFam" id="3.40.50.720:FF:000094">
    <property type="entry name" value="Bifunctional protein FolD"/>
    <property type="match status" value="1"/>
</dbReference>
<dbReference type="FunFam" id="3.40.50.10860:FF:000005">
    <property type="entry name" value="C-1-tetrahydrofolate synthase, cytoplasmic, putative"/>
    <property type="match status" value="1"/>
</dbReference>
<dbReference type="Gene3D" id="3.40.50.10860">
    <property type="entry name" value="Leucine Dehydrogenase, chain A, domain 1"/>
    <property type="match status" value="1"/>
</dbReference>
<dbReference type="Gene3D" id="3.40.50.720">
    <property type="entry name" value="NAD(P)-binding Rossmann-like Domain"/>
    <property type="match status" value="1"/>
</dbReference>
<dbReference type="HAMAP" id="MF_01576">
    <property type="entry name" value="THF_DHG_CYH"/>
    <property type="match status" value="1"/>
</dbReference>
<dbReference type="InterPro" id="IPR046346">
    <property type="entry name" value="Aminoacid_DH-like_N_sf"/>
</dbReference>
<dbReference type="InterPro" id="IPR036291">
    <property type="entry name" value="NAD(P)-bd_dom_sf"/>
</dbReference>
<dbReference type="InterPro" id="IPR000672">
    <property type="entry name" value="THF_DH/CycHdrlase"/>
</dbReference>
<dbReference type="InterPro" id="IPR020630">
    <property type="entry name" value="THF_DH/CycHdrlase_cat_dom"/>
</dbReference>
<dbReference type="InterPro" id="IPR020867">
    <property type="entry name" value="THF_DH/CycHdrlase_CS"/>
</dbReference>
<dbReference type="InterPro" id="IPR020631">
    <property type="entry name" value="THF_DH/CycHdrlase_NAD-bd_dom"/>
</dbReference>
<dbReference type="NCBIfam" id="NF008058">
    <property type="entry name" value="PRK10792.1"/>
    <property type="match status" value="1"/>
</dbReference>
<dbReference type="NCBIfam" id="NF010786">
    <property type="entry name" value="PRK14189.1"/>
    <property type="match status" value="1"/>
</dbReference>
<dbReference type="PANTHER" id="PTHR48099:SF5">
    <property type="entry name" value="C-1-TETRAHYDROFOLATE SYNTHASE, CYTOPLASMIC"/>
    <property type="match status" value="1"/>
</dbReference>
<dbReference type="PANTHER" id="PTHR48099">
    <property type="entry name" value="C-1-TETRAHYDROFOLATE SYNTHASE, CYTOPLASMIC-RELATED"/>
    <property type="match status" value="1"/>
</dbReference>
<dbReference type="Pfam" id="PF00763">
    <property type="entry name" value="THF_DHG_CYH"/>
    <property type="match status" value="1"/>
</dbReference>
<dbReference type="Pfam" id="PF02882">
    <property type="entry name" value="THF_DHG_CYH_C"/>
    <property type="match status" value="1"/>
</dbReference>
<dbReference type="PRINTS" id="PR00085">
    <property type="entry name" value="THFDHDRGNASE"/>
</dbReference>
<dbReference type="SUPFAM" id="SSF53223">
    <property type="entry name" value="Aminoacid dehydrogenase-like, N-terminal domain"/>
    <property type="match status" value="1"/>
</dbReference>
<dbReference type="SUPFAM" id="SSF51735">
    <property type="entry name" value="NAD(P)-binding Rossmann-fold domains"/>
    <property type="match status" value="1"/>
</dbReference>
<dbReference type="PROSITE" id="PS00767">
    <property type="entry name" value="THF_DHG_CYH_2"/>
    <property type="match status" value="1"/>
</dbReference>
<gene>
    <name evidence="1" type="primary">folD2</name>
    <name type="ordered locus">BP2522</name>
</gene>
<protein>
    <recommendedName>
        <fullName evidence="1">Bifunctional protein FolD 2</fullName>
    </recommendedName>
    <domain>
        <recommendedName>
            <fullName evidence="1">Methylenetetrahydrofolate dehydrogenase</fullName>
            <ecNumber evidence="1">1.5.1.5</ecNumber>
        </recommendedName>
    </domain>
    <domain>
        <recommendedName>
            <fullName evidence="1">Methenyltetrahydrofolate cyclohydrolase</fullName>
            <ecNumber evidence="1">3.5.4.9</ecNumber>
        </recommendedName>
    </domain>
</protein>
<name>FOLD2_BORPE</name>